<dbReference type="EC" id="4.1.1.65" evidence="1"/>
<dbReference type="EMBL" id="CP000766">
    <property type="protein sequence ID" value="ABY72288.1"/>
    <property type="molecule type" value="Genomic_DNA"/>
</dbReference>
<dbReference type="RefSeq" id="WP_012150539.1">
    <property type="nucleotide sequence ID" value="NC_010263.3"/>
</dbReference>
<dbReference type="KEGG" id="rrj:RrIowa_0393"/>
<dbReference type="eggNOG" id="COG0688">
    <property type="taxonomic scope" value="Bacteria"/>
</dbReference>
<dbReference type="HOGENOM" id="CLU_072492_0_0_5"/>
<dbReference type="UniPathway" id="UPA00558">
    <property type="reaction ID" value="UER00616"/>
</dbReference>
<dbReference type="Proteomes" id="UP000000796">
    <property type="component" value="Chromosome"/>
</dbReference>
<dbReference type="GO" id="GO:0005886">
    <property type="term" value="C:plasma membrane"/>
    <property type="evidence" value="ECO:0007669"/>
    <property type="project" value="UniProtKB-SubCell"/>
</dbReference>
<dbReference type="GO" id="GO:0004609">
    <property type="term" value="F:phosphatidylserine decarboxylase activity"/>
    <property type="evidence" value="ECO:0007669"/>
    <property type="project" value="UniProtKB-UniRule"/>
</dbReference>
<dbReference type="GO" id="GO:0006646">
    <property type="term" value="P:phosphatidylethanolamine biosynthetic process"/>
    <property type="evidence" value="ECO:0007669"/>
    <property type="project" value="UniProtKB-UniRule"/>
</dbReference>
<dbReference type="HAMAP" id="MF_00664">
    <property type="entry name" value="PS_decarb_PSD_A"/>
    <property type="match status" value="1"/>
</dbReference>
<dbReference type="InterPro" id="IPR003817">
    <property type="entry name" value="PS_Dcarbxylase"/>
</dbReference>
<dbReference type="InterPro" id="IPR033175">
    <property type="entry name" value="PSD-A"/>
</dbReference>
<dbReference type="NCBIfam" id="NF003677">
    <property type="entry name" value="PRK05305.1-1"/>
    <property type="match status" value="1"/>
</dbReference>
<dbReference type="NCBIfam" id="NF003678">
    <property type="entry name" value="PRK05305.1-2"/>
    <property type="match status" value="1"/>
</dbReference>
<dbReference type="NCBIfam" id="NF003679">
    <property type="entry name" value="PRK05305.1-3"/>
    <property type="match status" value="1"/>
</dbReference>
<dbReference type="NCBIfam" id="NF003681">
    <property type="entry name" value="PRK05305.2-1"/>
    <property type="match status" value="1"/>
</dbReference>
<dbReference type="NCBIfam" id="NF003685">
    <property type="entry name" value="PRK05305.2-5"/>
    <property type="match status" value="1"/>
</dbReference>
<dbReference type="PANTHER" id="PTHR35809">
    <property type="entry name" value="ARCHAETIDYLSERINE DECARBOXYLASE PROENZYME-RELATED"/>
    <property type="match status" value="1"/>
</dbReference>
<dbReference type="PANTHER" id="PTHR35809:SF1">
    <property type="entry name" value="ARCHAETIDYLSERINE DECARBOXYLASE PROENZYME-RELATED"/>
    <property type="match status" value="1"/>
</dbReference>
<dbReference type="Pfam" id="PF02666">
    <property type="entry name" value="PS_Dcarbxylase"/>
    <property type="match status" value="1"/>
</dbReference>
<organism>
    <name type="scientific">Rickettsia rickettsii (strain Iowa)</name>
    <dbReference type="NCBI Taxonomy" id="452659"/>
    <lineage>
        <taxon>Bacteria</taxon>
        <taxon>Pseudomonadati</taxon>
        <taxon>Pseudomonadota</taxon>
        <taxon>Alphaproteobacteria</taxon>
        <taxon>Rickettsiales</taxon>
        <taxon>Rickettsiaceae</taxon>
        <taxon>Rickettsieae</taxon>
        <taxon>Rickettsia</taxon>
        <taxon>spotted fever group</taxon>
    </lineage>
</organism>
<protein>
    <recommendedName>
        <fullName evidence="1">Phosphatidylserine decarboxylase proenzyme</fullName>
        <ecNumber evidence="1">4.1.1.65</ecNumber>
    </recommendedName>
    <component>
        <recommendedName>
            <fullName evidence="1">Phosphatidylserine decarboxylase alpha chain</fullName>
        </recommendedName>
    </component>
    <component>
        <recommendedName>
            <fullName evidence="1">Phosphatidylserine decarboxylase beta chain</fullName>
        </recommendedName>
    </component>
</protein>
<gene>
    <name evidence="1" type="primary">psd</name>
    <name type="ordered locus">RrIowa_0393</name>
</gene>
<accession>B0BWR2</accession>
<comment type="function">
    <text evidence="1">Catalyzes the formation of phosphatidylethanolamine (PtdEtn) from phosphatidylserine (PtdSer).</text>
</comment>
<comment type="catalytic activity">
    <reaction evidence="1">
        <text>a 1,2-diacyl-sn-glycero-3-phospho-L-serine + H(+) = a 1,2-diacyl-sn-glycero-3-phosphoethanolamine + CO2</text>
        <dbReference type="Rhea" id="RHEA:20828"/>
        <dbReference type="ChEBI" id="CHEBI:15378"/>
        <dbReference type="ChEBI" id="CHEBI:16526"/>
        <dbReference type="ChEBI" id="CHEBI:57262"/>
        <dbReference type="ChEBI" id="CHEBI:64612"/>
        <dbReference type="EC" id="4.1.1.65"/>
    </reaction>
</comment>
<comment type="cofactor">
    <cofactor evidence="1">
        <name>pyruvate</name>
        <dbReference type="ChEBI" id="CHEBI:15361"/>
    </cofactor>
    <text evidence="1">Binds 1 pyruvoyl group covalently per subunit.</text>
</comment>
<comment type="pathway">
    <text evidence="1">Phospholipid metabolism; phosphatidylethanolamine biosynthesis; phosphatidylethanolamine from CDP-diacylglycerol: step 2/2.</text>
</comment>
<comment type="subunit">
    <text evidence="1">Heterodimer of a large membrane-associated beta subunit and a small pyruvoyl-containing alpha subunit.</text>
</comment>
<comment type="subcellular location">
    <subcellularLocation>
        <location evidence="1">Cell membrane</location>
        <topology evidence="1">Peripheral membrane protein</topology>
    </subcellularLocation>
</comment>
<comment type="PTM">
    <text evidence="1">Is synthesized initially as an inactive proenzyme. Formation of the active enzyme involves a self-maturation process in which the active site pyruvoyl group is generated from an internal serine residue via an autocatalytic post-translational modification. Two non-identical subunits are generated from the proenzyme in this reaction, and the pyruvate is formed at the N-terminus of the alpha chain, which is derived from the carboxyl end of the proenzyme. The post-translation cleavage follows an unusual pathway, termed non-hydrolytic serinolysis, in which the side chain hydroxyl group of the serine supplies its oxygen atom to form the C-terminus of the beta chain, while the remainder of the serine residue undergoes an oxidative deamination to produce ammonia and the pyruvoyl prosthetic group on the alpha chain.</text>
</comment>
<comment type="similarity">
    <text evidence="1">Belongs to the phosphatidylserine decarboxylase family. PSD-A subfamily.</text>
</comment>
<keyword id="KW-1003">Cell membrane</keyword>
<keyword id="KW-0210">Decarboxylase</keyword>
<keyword id="KW-0444">Lipid biosynthesis</keyword>
<keyword id="KW-0443">Lipid metabolism</keyword>
<keyword id="KW-0456">Lyase</keyword>
<keyword id="KW-0472">Membrane</keyword>
<keyword id="KW-0594">Phospholipid biosynthesis</keyword>
<keyword id="KW-1208">Phospholipid metabolism</keyword>
<keyword id="KW-0670">Pyruvate</keyword>
<keyword id="KW-0865">Zymogen</keyword>
<feature type="chain" id="PRO_1000082934" description="Phosphatidylserine decarboxylase beta chain" evidence="1">
    <location>
        <begin position="1"/>
        <end position="187"/>
    </location>
</feature>
<feature type="chain" id="PRO_1000082935" description="Phosphatidylserine decarboxylase alpha chain" evidence="1">
    <location>
        <begin position="188"/>
        <end position="231"/>
    </location>
</feature>
<feature type="active site" description="Schiff-base intermediate with substrate; via pyruvic acid" evidence="1">
    <location>
        <position position="188"/>
    </location>
</feature>
<feature type="site" description="Cleavage (non-hydrolytic); by autocatalysis" evidence="1">
    <location>
        <begin position="187"/>
        <end position="188"/>
    </location>
</feature>
<feature type="modified residue" description="Pyruvic acid (Ser); by autocatalysis" evidence="1">
    <location>
        <position position="188"/>
    </location>
</feature>
<proteinExistence type="inferred from homology"/>
<reference key="1">
    <citation type="journal article" date="2008" name="Infect. Immun.">
        <title>Genomic comparison of virulent Rickettsia rickettsii Sheila Smith and avirulent Rickettsia rickettsii Iowa.</title>
        <authorList>
            <person name="Ellison D.W."/>
            <person name="Clark T.R."/>
            <person name="Sturdevant D.E."/>
            <person name="Virtaneva K."/>
            <person name="Porcella S.F."/>
            <person name="Hackstadt T."/>
        </authorList>
    </citation>
    <scope>NUCLEOTIDE SEQUENCE [LARGE SCALE GENOMIC DNA]</scope>
    <source>
        <strain>Iowa</strain>
    </source>
</reference>
<name>PSD_RICRO</name>
<sequence>MKQYNDLFKIIHREGYIFIASFALVSFLLASFNEKLGCIGCIATAWCIYFFRNPDRFVPISDDLVISPADGIIQEIKEALPPPELGLGDVEMIRVSIFLNLFNVHVNRIPANGKILALHYNPGKFFNASLDKASIYNERQSVLMEMAQGQKIVFVQIAGLIARRIVCDLEEGNEVKTGERYGIIRFGSRVDVYLPLKTALLVSKGQTAIGGETIIADFGRKKTTEFKFERK</sequence>
<evidence type="ECO:0000255" key="1">
    <source>
        <dbReference type="HAMAP-Rule" id="MF_00664"/>
    </source>
</evidence>